<organism>
    <name type="scientific">Pseudomonas syringae pv. tomato (strain ATCC BAA-871 / DC3000)</name>
    <dbReference type="NCBI Taxonomy" id="223283"/>
    <lineage>
        <taxon>Bacteria</taxon>
        <taxon>Pseudomonadati</taxon>
        <taxon>Pseudomonadota</taxon>
        <taxon>Gammaproteobacteria</taxon>
        <taxon>Pseudomonadales</taxon>
        <taxon>Pseudomonadaceae</taxon>
        <taxon>Pseudomonas</taxon>
    </lineage>
</organism>
<sequence>MSASTTATLRHDWTLAEVRALFVQPFNDLLFQAQTLHRAHFDANRVQVSTLLSIKTGACPEDCKYCPQSGHYNTGLEKEKLLEVQKVLEEAARAKSIGSTRFCMGAAWKHPSAKDMPYVLEMVKGVKAMGLETCMTLGRLDQEQTEALATAGLDYYNHNLDTSPEFYGSIITTRTYGERLQTLAYVRDAGMKICSGGILGMGESLDDRAGLLIQLANLPEHPESVPINMLVKVAGTPLENAEDVDPFDFIRMLAVARILMPQSHVRLSAGREAMNEQMQALAFFAGANSIFYGDKLLTTANPQADKDMLLFSRLGIKPEAGEGHADEVHQAAIEQALVEQQSSAMFYDAASA</sequence>
<protein>
    <recommendedName>
        <fullName evidence="1">Biotin synthase</fullName>
        <ecNumber evidence="1">2.8.1.6</ecNumber>
    </recommendedName>
</protein>
<keyword id="KW-0001">2Fe-2S</keyword>
<keyword id="KW-0004">4Fe-4S</keyword>
<keyword id="KW-0093">Biotin biosynthesis</keyword>
<keyword id="KW-0408">Iron</keyword>
<keyword id="KW-0411">Iron-sulfur</keyword>
<keyword id="KW-0479">Metal-binding</keyword>
<keyword id="KW-1185">Reference proteome</keyword>
<keyword id="KW-0949">S-adenosyl-L-methionine</keyword>
<keyword id="KW-0808">Transferase</keyword>
<comment type="function">
    <text evidence="1">Catalyzes the conversion of dethiobiotin (DTB) to biotin by the insertion of a sulfur atom into dethiobiotin via a radical-based mechanism.</text>
</comment>
<comment type="catalytic activity">
    <reaction evidence="1">
        <text>(4R,5S)-dethiobiotin + (sulfur carrier)-SH + 2 reduced [2Fe-2S]-[ferredoxin] + 2 S-adenosyl-L-methionine = (sulfur carrier)-H + biotin + 2 5'-deoxyadenosine + 2 L-methionine + 2 oxidized [2Fe-2S]-[ferredoxin]</text>
        <dbReference type="Rhea" id="RHEA:22060"/>
        <dbReference type="Rhea" id="RHEA-COMP:10000"/>
        <dbReference type="Rhea" id="RHEA-COMP:10001"/>
        <dbReference type="Rhea" id="RHEA-COMP:14737"/>
        <dbReference type="Rhea" id="RHEA-COMP:14739"/>
        <dbReference type="ChEBI" id="CHEBI:17319"/>
        <dbReference type="ChEBI" id="CHEBI:29917"/>
        <dbReference type="ChEBI" id="CHEBI:33737"/>
        <dbReference type="ChEBI" id="CHEBI:33738"/>
        <dbReference type="ChEBI" id="CHEBI:57586"/>
        <dbReference type="ChEBI" id="CHEBI:57844"/>
        <dbReference type="ChEBI" id="CHEBI:59789"/>
        <dbReference type="ChEBI" id="CHEBI:64428"/>
        <dbReference type="ChEBI" id="CHEBI:149473"/>
        <dbReference type="EC" id="2.8.1.6"/>
    </reaction>
</comment>
<comment type="cofactor">
    <cofactor evidence="1">
        <name>[4Fe-4S] cluster</name>
        <dbReference type="ChEBI" id="CHEBI:49883"/>
    </cofactor>
    <text evidence="1">Binds 1 [4Fe-4S] cluster. The cluster is coordinated with 3 cysteines and an exchangeable S-adenosyl-L-methionine.</text>
</comment>
<comment type="cofactor">
    <cofactor evidence="1">
        <name>[2Fe-2S] cluster</name>
        <dbReference type="ChEBI" id="CHEBI:190135"/>
    </cofactor>
    <text evidence="1">Binds 1 [2Fe-2S] cluster. The cluster is coordinated with 3 cysteines and 1 arginine.</text>
</comment>
<comment type="pathway">
    <text evidence="1">Cofactor biosynthesis; biotin biosynthesis; biotin from 7,8-diaminononanoate: step 2/2.</text>
</comment>
<comment type="subunit">
    <text evidence="1">Homodimer.</text>
</comment>
<comment type="similarity">
    <text evidence="1">Belongs to the radical SAM superfamily. Biotin synthase family.</text>
</comment>
<proteinExistence type="inferred from homology"/>
<evidence type="ECO:0000255" key="1">
    <source>
        <dbReference type="HAMAP-Rule" id="MF_01694"/>
    </source>
</evidence>
<evidence type="ECO:0000255" key="2">
    <source>
        <dbReference type="PROSITE-ProRule" id="PRU01266"/>
    </source>
</evidence>
<reference key="1">
    <citation type="journal article" date="2003" name="Proc. Natl. Acad. Sci. U.S.A.">
        <title>The complete genome sequence of the Arabidopsis and tomato pathogen Pseudomonas syringae pv. tomato DC3000.</title>
        <authorList>
            <person name="Buell C.R."/>
            <person name="Joardar V."/>
            <person name="Lindeberg M."/>
            <person name="Selengut J."/>
            <person name="Paulsen I.T."/>
            <person name="Gwinn M.L."/>
            <person name="Dodson R.J."/>
            <person name="DeBoy R.T."/>
            <person name="Durkin A.S."/>
            <person name="Kolonay J.F."/>
            <person name="Madupu R."/>
            <person name="Daugherty S.C."/>
            <person name="Brinkac L.M."/>
            <person name="Beanan M.J."/>
            <person name="Haft D.H."/>
            <person name="Nelson W.C."/>
            <person name="Davidsen T.M."/>
            <person name="Zafar N."/>
            <person name="Zhou L."/>
            <person name="Liu J."/>
            <person name="Yuan Q."/>
            <person name="Khouri H.M."/>
            <person name="Fedorova N.B."/>
            <person name="Tran B."/>
            <person name="Russell D."/>
            <person name="Berry K.J."/>
            <person name="Utterback T.R."/>
            <person name="Van Aken S.E."/>
            <person name="Feldblyum T.V."/>
            <person name="D'Ascenzo M."/>
            <person name="Deng W.-L."/>
            <person name="Ramos A.R."/>
            <person name="Alfano J.R."/>
            <person name="Cartinhour S."/>
            <person name="Chatterjee A.K."/>
            <person name="Delaney T.P."/>
            <person name="Lazarowitz S.G."/>
            <person name="Martin G.B."/>
            <person name="Schneider D.J."/>
            <person name="Tang X."/>
            <person name="Bender C.L."/>
            <person name="White O."/>
            <person name="Fraser C.M."/>
            <person name="Collmer A."/>
        </authorList>
    </citation>
    <scope>NUCLEOTIDE SEQUENCE [LARGE SCALE GENOMIC DNA]</scope>
    <source>
        <strain>ATCC BAA-871 / DC3000</strain>
    </source>
</reference>
<dbReference type="EC" id="2.8.1.6" evidence="1"/>
<dbReference type="EMBL" id="AE016853">
    <property type="protein sequence ID" value="AAO54038.1"/>
    <property type="molecule type" value="Genomic_DNA"/>
</dbReference>
<dbReference type="RefSeq" id="NP_790343.1">
    <property type="nucleotide sequence ID" value="NC_004578.1"/>
</dbReference>
<dbReference type="RefSeq" id="WP_005763762.1">
    <property type="nucleotide sequence ID" value="NC_004578.1"/>
</dbReference>
<dbReference type="SMR" id="Q88A98"/>
<dbReference type="STRING" id="223283.PSPTO_0494"/>
<dbReference type="GeneID" id="1182103"/>
<dbReference type="KEGG" id="pst:PSPTO_0494"/>
<dbReference type="PATRIC" id="fig|223283.9.peg.511"/>
<dbReference type="eggNOG" id="COG0502">
    <property type="taxonomic scope" value="Bacteria"/>
</dbReference>
<dbReference type="HOGENOM" id="CLU_033172_1_2_6"/>
<dbReference type="OrthoDB" id="9786826at2"/>
<dbReference type="PhylomeDB" id="Q88A98"/>
<dbReference type="UniPathway" id="UPA00078">
    <property type="reaction ID" value="UER00162"/>
</dbReference>
<dbReference type="Proteomes" id="UP000002515">
    <property type="component" value="Chromosome"/>
</dbReference>
<dbReference type="GO" id="GO:0051537">
    <property type="term" value="F:2 iron, 2 sulfur cluster binding"/>
    <property type="evidence" value="ECO:0007669"/>
    <property type="project" value="UniProtKB-KW"/>
</dbReference>
<dbReference type="GO" id="GO:0051539">
    <property type="term" value="F:4 iron, 4 sulfur cluster binding"/>
    <property type="evidence" value="ECO:0007669"/>
    <property type="project" value="UniProtKB-KW"/>
</dbReference>
<dbReference type="GO" id="GO:0004076">
    <property type="term" value="F:biotin synthase activity"/>
    <property type="evidence" value="ECO:0007669"/>
    <property type="project" value="UniProtKB-UniRule"/>
</dbReference>
<dbReference type="GO" id="GO:0005506">
    <property type="term" value="F:iron ion binding"/>
    <property type="evidence" value="ECO:0007669"/>
    <property type="project" value="UniProtKB-UniRule"/>
</dbReference>
<dbReference type="GO" id="GO:0009102">
    <property type="term" value="P:biotin biosynthetic process"/>
    <property type="evidence" value="ECO:0007669"/>
    <property type="project" value="UniProtKB-UniRule"/>
</dbReference>
<dbReference type="CDD" id="cd01335">
    <property type="entry name" value="Radical_SAM"/>
    <property type="match status" value="1"/>
</dbReference>
<dbReference type="FunFam" id="3.20.20.70:FF:000011">
    <property type="entry name" value="Biotin synthase"/>
    <property type="match status" value="1"/>
</dbReference>
<dbReference type="Gene3D" id="3.20.20.70">
    <property type="entry name" value="Aldolase class I"/>
    <property type="match status" value="1"/>
</dbReference>
<dbReference type="HAMAP" id="MF_01694">
    <property type="entry name" value="BioB"/>
    <property type="match status" value="1"/>
</dbReference>
<dbReference type="InterPro" id="IPR013785">
    <property type="entry name" value="Aldolase_TIM"/>
</dbReference>
<dbReference type="InterPro" id="IPR010722">
    <property type="entry name" value="BATS_dom"/>
</dbReference>
<dbReference type="InterPro" id="IPR002684">
    <property type="entry name" value="Biotin_synth/BioAB"/>
</dbReference>
<dbReference type="InterPro" id="IPR024177">
    <property type="entry name" value="Biotin_synthase"/>
</dbReference>
<dbReference type="InterPro" id="IPR006638">
    <property type="entry name" value="Elp3/MiaA/NifB-like_rSAM"/>
</dbReference>
<dbReference type="InterPro" id="IPR007197">
    <property type="entry name" value="rSAM"/>
</dbReference>
<dbReference type="NCBIfam" id="TIGR00433">
    <property type="entry name" value="bioB"/>
    <property type="match status" value="1"/>
</dbReference>
<dbReference type="PANTHER" id="PTHR22976">
    <property type="entry name" value="BIOTIN SYNTHASE"/>
    <property type="match status" value="1"/>
</dbReference>
<dbReference type="PANTHER" id="PTHR22976:SF2">
    <property type="entry name" value="BIOTIN SYNTHASE, MITOCHONDRIAL"/>
    <property type="match status" value="1"/>
</dbReference>
<dbReference type="Pfam" id="PF06968">
    <property type="entry name" value="BATS"/>
    <property type="match status" value="1"/>
</dbReference>
<dbReference type="Pfam" id="PF04055">
    <property type="entry name" value="Radical_SAM"/>
    <property type="match status" value="1"/>
</dbReference>
<dbReference type="PIRSF" id="PIRSF001619">
    <property type="entry name" value="Biotin_synth"/>
    <property type="match status" value="1"/>
</dbReference>
<dbReference type="SFLD" id="SFLDF00272">
    <property type="entry name" value="biotin_synthase"/>
    <property type="match status" value="1"/>
</dbReference>
<dbReference type="SFLD" id="SFLDS00029">
    <property type="entry name" value="Radical_SAM"/>
    <property type="match status" value="1"/>
</dbReference>
<dbReference type="SMART" id="SM00876">
    <property type="entry name" value="BATS"/>
    <property type="match status" value="1"/>
</dbReference>
<dbReference type="SMART" id="SM00729">
    <property type="entry name" value="Elp3"/>
    <property type="match status" value="1"/>
</dbReference>
<dbReference type="SUPFAM" id="SSF102114">
    <property type="entry name" value="Radical SAM enzymes"/>
    <property type="match status" value="1"/>
</dbReference>
<dbReference type="PROSITE" id="PS51918">
    <property type="entry name" value="RADICAL_SAM"/>
    <property type="match status" value="1"/>
</dbReference>
<feature type="chain" id="PRO_0000381565" description="Biotin synthase">
    <location>
        <begin position="1"/>
        <end position="352"/>
    </location>
</feature>
<feature type="domain" description="Radical SAM core" evidence="2">
    <location>
        <begin position="44"/>
        <end position="262"/>
    </location>
</feature>
<feature type="binding site" evidence="1">
    <location>
        <position position="59"/>
    </location>
    <ligand>
        <name>[4Fe-4S] cluster</name>
        <dbReference type="ChEBI" id="CHEBI:49883"/>
        <note>4Fe-4S-S-AdoMet</note>
    </ligand>
</feature>
<feature type="binding site" evidence="1">
    <location>
        <position position="63"/>
    </location>
    <ligand>
        <name>[4Fe-4S] cluster</name>
        <dbReference type="ChEBI" id="CHEBI:49883"/>
        <note>4Fe-4S-S-AdoMet</note>
    </ligand>
</feature>
<feature type="binding site" evidence="1">
    <location>
        <position position="66"/>
    </location>
    <ligand>
        <name>[4Fe-4S] cluster</name>
        <dbReference type="ChEBI" id="CHEBI:49883"/>
        <note>4Fe-4S-S-AdoMet</note>
    </ligand>
</feature>
<feature type="binding site" evidence="1">
    <location>
        <position position="103"/>
    </location>
    <ligand>
        <name>[2Fe-2S] cluster</name>
        <dbReference type="ChEBI" id="CHEBI:190135"/>
    </ligand>
</feature>
<feature type="binding site" evidence="1">
    <location>
        <position position="134"/>
    </location>
    <ligand>
        <name>[2Fe-2S] cluster</name>
        <dbReference type="ChEBI" id="CHEBI:190135"/>
    </ligand>
</feature>
<feature type="binding site" evidence="1">
    <location>
        <position position="194"/>
    </location>
    <ligand>
        <name>[2Fe-2S] cluster</name>
        <dbReference type="ChEBI" id="CHEBI:190135"/>
    </ligand>
</feature>
<feature type="binding site" evidence="1">
    <location>
        <position position="266"/>
    </location>
    <ligand>
        <name>[2Fe-2S] cluster</name>
        <dbReference type="ChEBI" id="CHEBI:190135"/>
    </ligand>
</feature>
<name>BIOB_PSESM</name>
<gene>
    <name evidence="1" type="primary">bioB</name>
    <name type="ordered locus">PSPTO_0494</name>
    <name type="ORF">PSPTO0494</name>
</gene>
<accession>Q88A98</accession>